<sequence length="198" mass="22367">MSFIFEWIYNGFSSVLQFLGLYKKSGKLVFLGLDNAGKTTLLHMLKDDRLGQHVPTLHPTSEELTIAGMTFTTFDLGGHEQARRVWKNYLPAINGIVFLVDCADHSRLVESKVELNALMTDETISNVPILILGNKIDRTDAISEEKLREIFGLYGQTTGKGNVTLKELNARPMEVFMCSVLKRQGYGEGFRWLSQYID</sequence>
<keyword id="KW-0002">3D-structure</keyword>
<keyword id="KW-0025">Alternative splicing</keyword>
<keyword id="KW-0963">Cytoplasm</keyword>
<keyword id="KW-0256">Endoplasmic reticulum</keyword>
<keyword id="KW-0931">ER-Golgi transport</keyword>
<keyword id="KW-0333">Golgi apparatus</keyword>
<keyword id="KW-0342">GTP-binding</keyword>
<keyword id="KW-0378">Hydrolase</keyword>
<keyword id="KW-0458">Lysosome</keyword>
<keyword id="KW-0472">Membrane</keyword>
<keyword id="KW-0547">Nucleotide-binding</keyword>
<keyword id="KW-0597">Phosphoprotein</keyword>
<keyword id="KW-0653">Protein transport</keyword>
<keyword id="KW-1267">Proteomics identification</keyword>
<keyword id="KW-1185">Reference proteome</keyword>
<keyword id="KW-0813">Transport</keyword>
<feature type="chain" id="PRO_0000206258" description="Small COPII coat GTPase SAR1A">
    <location>
        <begin position="1"/>
        <end position="198"/>
    </location>
</feature>
<feature type="region of interest" description="Mediates recruitment to ER membranes" evidence="1">
    <location>
        <begin position="15"/>
        <end position="19"/>
    </location>
</feature>
<feature type="short sequence motif" description="STAR; SAR1-N-terminal activation recruitment. Required for the activation by PREB and subsequent recruitment to ER membrane" evidence="1">
    <location>
        <begin position="3"/>
        <end position="5"/>
    </location>
</feature>
<feature type="binding site" evidence="9 19 20">
    <location>
        <position position="34"/>
    </location>
    <ligand>
        <name>Mg(2+)</name>
        <dbReference type="ChEBI" id="CHEBI:18420"/>
    </ligand>
</feature>
<feature type="binding site" evidence="9 18">
    <location>
        <position position="35"/>
    </location>
    <ligand>
        <name>GDP</name>
        <dbReference type="ChEBI" id="CHEBI:58189"/>
    </ligand>
</feature>
<feature type="binding site" evidence="2">
    <location>
        <position position="35"/>
    </location>
    <ligand>
        <name>GTP</name>
        <dbReference type="ChEBI" id="CHEBI:37565"/>
    </ligand>
</feature>
<feature type="binding site" evidence="9 18">
    <location>
        <position position="36"/>
    </location>
    <ligand>
        <name>GDP</name>
        <dbReference type="ChEBI" id="CHEBI:58189"/>
    </ligand>
</feature>
<feature type="binding site" evidence="9 18">
    <location>
        <position position="37"/>
    </location>
    <ligand>
        <name>GDP</name>
        <dbReference type="ChEBI" id="CHEBI:58189"/>
    </ligand>
</feature>
<feature type="binding site" evidence="2">
    <location>
        <position position="37"/>
    </location>
    <ligand>
        <name>GTP</name>
        <dbReference type="ChEBI" id="CHEBI:37565"/>
    </ligand>
</feature>
<feature type="binding site" evidence="9 18">
    <location>
        <position position="38"/>
    </location>
    <ligand>
        <name>GDP</name>
        <dbReference type="ChEBI" id="CHEBI:58189"/>
    </ligand>
</feature>
<feature type="binding site" evidence="2">
    <location>
        <position position="38"/>
    </location>
    <ligand>
        <name>GTP</name>
        <dbReference type="ChEBI" id="CHEBI:37565"/>
    </ligand>
</feature>
<feature type="binding site" evidence="9 18">
    <location>
        <position position="39"/>
    </location>
    <ligand>
        <name>GDP</name>
        <dbReference type="ChEBI" id="CHEBI:58189"/>
    </ligand>
</feature>
<feature type="binding site" evidence="2">
    <location>
        <position position="39"/>
    </location>
    <ligand>
        <name>GTP</name>
        <dbReference type="ChEBI" id="CHEBI:37565"/>
    </ligand>
</feature>
<feature type="binding site" evidence="9 18">
    <location>
        <position position="40"/>
    </location>
    <ligand>
        <name>GDP</name>
        <dbReference type="ChEBI" id="CHEBI:58189"/>
    </ligand>
</feature>
<feature type="binding site" evidence="2">
    <location>
        <position position="40"/>
    </location>
    <ligand>
        <name>GTP</name>
        <dbReference type="ChEBI" id="CHEBI:37565"/>
    </ligand>
</feature>
<feature type="binding site" evidence="9 19 20">
    <location>
        <position position="75"/>
    </location>
    <ligand>
        <name>Mg(2+)</name>
        <dbReference type="ChEBI" id="CHEBI:18420"/>
    </ligand>
</feature>
<feature type="binding site" evidence="9 18">
    <location>
        <position position="134"/>
    </location>
    <ligand>
        <name>GDP</name>
        <dbReference type="ChEBI" id="CHEBI:58189"/>
    </ligand>
</feature>
<feature type="binding site" evidence="2">
    <location>
        <position position="134"/>
    </location>
    <ligand>
        <name>GTP</name>
        <dbReference type="ChEBI" id="CHEBI:37565"/>
    </ligand>
</feature>
<feature type="binding site" evidence="9 18">
    <location>
        <position position="135"/>
    </location>
    <ligand>
        <name>GDP</name>
        <dbReference type="ChEBI" id="CHEBI:58189"/>
    </ligand>
</feature>
<feature type="binding site" evidence="2">
    <location>
        <position position="135"/>
    </location>
    <ligand>
        <name>GTP</name>
        <dbReference type="ChEBI" id="CHEBI:37565"/>
    </ligand>
</feature>
<feature type="binding site" evidence="9 18">
    <location>
        <position position="137"/>
    </location>
    <ligand>
        <name>GDP</name>
        <dbReference type="ChEBI" id="CHEBI:58189"/>
    </ligand>
</feature>
<feature type="binding site" evidence="2">
    <location>
        <position position="137"/>
    </location>
    <ligand>
        <name>GTP</name>
        <dbReference type="ChEBI" id="CHEBI:37565"/>
    </ligand>
</feature>
<feature type="binding site" evidence="9 18">
    <location>
        <position position="180"/>
    </location>
    <ligand>
        <name>GDP</name>
        <dbReference type="ChEBI" id="CHEBI:58189"/>
    </ligand>
</feature>
<feature type="binding site" evidence="2">
    <location>
        <position position="180"/>
    </location>
    <ligand>
        <name>GTP</name>
        <dbReference type="ChEBI" id="CHEBI:37565"/>
    </ligand>
</feature>
<feature type="binding site" evidence="9 18">
    <location>
        <position position="181"/>
    </location>
    <ligand>
        <name>GDP</name>
        <dbReference type="ChEBI" id="CHEBI:58189"/>
    </ligand>
</feature>
<feature type="binding site" evidence="2">
    <location>
        <position position="181"/>
    </location>
    <ligand>
        <name>GTP</name>
        <dbReference type="ChEBI" id="CHEBI:37565"/>
    </ligand>
</feature>
<feature type="modified residue" description="Phosphothreonine" evidence="22 23 24">
    <location>
        <position position="139"/>
    </location>
</feature>
<feature type="splice variant" id="VSP_056220" description="In isoform 2." evidence="10">
    <location>
        <begin position="1"/>
        <end position="43"/>
    </location>
</feature>
<feature type="mutagenesis site" description="Decreases transport of STING1 from the endoplasmic reticulum to the Golgi." evidence="7">
    <original>H</original>
    <variation>G</variation>
    <location>
        <position position="79"/>
    </location>
</feature>
<feature type="helix" evidence="26">
    <location>
        <begin position="14"/>
        <end position="18"/>
    </location>
</feature>
<feature type="strand" evidence="26">
    <location>
        <begin position="26"/>
        <end position="31"/>
    </location>
</feature>
<feature type="helix" evidence="26">
    <location>
        <begin position="38"/>
        <end position="43"/>
    </location>
</feature>
<feature type="strand" evidence="26">
    <location>
        <begin position="62"/>
        <end position="66"/>
    </location>
</feature>
<feature type="strand" evidence="26">
    <location>
        <begin position="69"/>
        <end position="73"/>
    </location>
</feature>
<feature type="helix" evidence="27">
    <location>
        <begin position="85"/>
        <end position="89"/>
    </location>
</feature>
<feature type="helix" evidence="25">
    <location>
        <begin position="90"/>
        <end position="92"/>
    </location>
</feature>
<feature type="strand" evidence="26">
    <location>
        <begin position="94"/>
        <end position="101"/>
    </location>
</feature>
<feature type="helix" evidence="26">
    <location>
        <begin position="105"/>
        <end position="107"/>
    </location>
</feature>
<feature type="helix" evidence="26">
    <location>
        <begin position="108"/>
        <end position="119"/>
    </location>
</feature>
<feature type="helix" evidence="26">
    <location>
        <begin position="122"/>
        <end position="124"/>
    </location>
</feature>
<feature type="strand" evidence="26">
    <location>
        <begin position="129"/>
        <end position="134"/>
    </location>
</feature>
<feature type="helix" evidence="26">
    <location>
        <begin position="144"/>
        <end position="151"/>
    </location>
</feature>
<feature type="turn" evidence="26">
    <location>
        <begin position="154"/>
        <end position="156"/>
    </location>
</feature>
<feature type="turn" evidence="26">
    <location>
        <begin position="165"/>
        <end position="167"/>
    </location>
</feature>
<feature type="strand" evidence="26">
    <location>
        <begin position="173"/>
        <end position="177"/>
    </location>
</feature>
<feature type="turn" evidence="26">
    <location>
        <begin position="180"/>
        <end position="183"/>
    </location>
</feature>
<feature type="helix" evidence="26">
    <location>
        <begin position="186"/>
        <end position="194"/>
    </location>
</feature>
<comment type="function">
    <text evidence="3 5 6 8 9">Small GTPase that cycles between an active GTP-bound and an inactive GDP-bound state and mainly functions in vesicle-mediated endoplasmic reticulum (ER) to Golgi transport. The active GTP-bound form inserts into the endoplasmic reticulum membrane where it recruits the remainder of the coat protein complex II/COPII. The coat protein complex II assembling and polymerizing on endoplasmic reticulum membrane is responsible for both the sorting of cargos and the deformation and budding of membranes into vesicles destined to the Golgi (PubMed:23433038, PubMed:32358066, PubMed:36369712). The GTPase activity of SAR1 by controlling the timing of COPII budding regulates the size of the formed vesicles and is important for cargo selection depending on their size (PubMed:32358066). Together with SEC16A, forms the organized scaffold defining endoplasmic reticulum exit sites (ERES), some specific domains of the endoplasmic reticulum where COPII vesicles form (PubMed:17005010). In addition to its role in vesicle trafficking, can also function as a leucine sensor regulating TORC1 signaling and more indirectly cellular metabolism, growth and survival. In absence of leucine, interacts with the GATOR2 complex via MIOS and inhibits TORC1 signaling. The binding of leucine abrogates the interaction with GATOR2 and the inhibition of the TORC1 signaling. This function is completely independent of the GTPase activity of SAR1B (PubMed:34290409).</text>
</comment>
<comment type="catalytic activity">
    <reaction evidence="6 9">
        <text>GTP + H2O = GDP + phosphate + H(+)</text>
        <dbReference type="Rhea" id="RHEA:19669"/>
        <dbReference type="ChEBI" id="CHEBI:15377"/>
        <dbReference type="ChEBI" id="CHEBI:15378"/>
        <dbReference type="ChEBI" id="CHEBI:37565"/>
        <dbReference type="ChEBI" id="CHEBI:43474"/>
        <dbReference type="ChEBI" id="CHEBI:58189"/>
        <dbReference type="EC" id="3.6.5.2"/>
    </reaction>
    <physiologicalReaction direction="left-to-right" evidence="15">
        <dbReference type="Rhea" id="RHEA:19670"/>
    </physiologicalReaction>
</comment>
<comment type="activity regulation">
    <text evidence="6 9">Small GTPases activation is mediated by guanine exchange factors (GEF), while inactivation through hydrolysis of the bound GTP is stimulated by GTPase activating proteins (GAP). Activated by the guanine nucleotide exchange factor PREB/SEC12 that facilitates the loading of SAR1B with GTP (PubMed:32358066). Inhibited by the alarmone ppGpp (PubMed:36369712).</text>
</comment>
<comment type="biophysicochemical properties">
    <kinetics>
        <Vmax evidence="9">38.1 nmol/h/mg enzyme toward GTP (at 37 degrees Celsius)</Vmax>
    </kinetics>
</comment>
<comment type="subunit">
    <text evidence="4 6 9 14">Homodimer; upon association with membrane (PubMed:32358066, PubMed:36369712). Part of the coat protein complex II/COPII, composed of SEC23/24 and SEC13/31 heterodimers, that it helps recruit and assemble on endoplasmic reticulum (ER) membranes at ER exit sites (PubMed:32358066). Interacts with PREB; PREB acts as a guanine nucleotide exchange factor facilitating the activation of SAR1B by loading it with GTP (PubMed:32358066). Interacts with B3GAT1 (PubMed:19181664). Interacts with MIOS; the interaction is direct, disrupted by the binding of leucine and mediates the interaction of SAR1A with the GATOR2 complex to negatively regulate the TORC1 signaling upon leucine deprivation (Probable).</text>
</comment>
<comment type="interaction">
    <interactant intactId="EBI-3920694">
        <id>Q9NR31</id>
    </interactant>
    <interactant intactId="EBI-11277970">
        <id>Q9UHX3</id>
        <label>ADGRE2</label>
    </interactant>
    <organismsDiffer>false</organismsDiffer>
    <experiments>3</experiments>
</comment>
<comment type="interaction">
    <interactant intactId="EBI-3920694">
        <id>Q9NR31</id>
    </interactant>
    <interactant intactId="EBI-11957045">
        <id>Q9NVV5-2</id>
        <label>AIG1</label>
    </interactant>
    <organismsDiffer>false</organismsDiffer>
    <experiments>3</experiments>
</comment>
<comment type="interaction">
    <interactant intactId="EBI-3920694">
        <id>Q9NR31</id>
    </interactant>
    <interactant intactId="EBI-3921603">
        <id>Q9BVK2</id>
        <label>ALG8</label>
    </interactant>
    <organismsDiffer>false</organismsDiffer>
    <experiments>3</experiments>
</comment>
<comment type="interaction">
    <interactant intactId="EBI-3920694">
        <id>Q9NR31</id>
    </interactant>
    <interactant intactId="EBI-745213">
        <id>P29972</id>
        <label>AQP1</label>
    </interactant>
    <organismsDiffer>false</organismsDiffer>
    <experiments>3</experiments>
</comment>
<comment type="interaction">
    <interactant intactId="EBI-3920694">
        <id>Q9NR31</id>
    </interactant>
    <interactant intactId="EBI-12820279">
        <id>Q96PS8</id>
        <label>AQP10</label>
    </interactant>
    <organismsDiffer>false</organismsDiffer>
    <experiments>3</experiments>
</comment>
<comment type="interaction">
    <interactant intactId="EBI-3920694">
        <id>Q9NR31</id>
    </interactant>
    <interactant intactId="EBI-2808854">
        <id>Q92482</id>
        <label>AQP3</label>
    </interactant>
    <organismsDiffer>false</organismsDiffer>
    <experiments>3</experiments>
</comment>
<comment type="interaction">
    <interactant intactId="EBI-3920694">
        <id>Q9NR31</id>
    </interactant>
    <interactant intactId="EBI-1172335">
        <id>P07306</id>
        <label>ASGR1</label>
    </interactant>
    <organismsDiffer>false</organismsDiffer>
    <experiments>3</experiments>
</comment>
<comment type="interaction">
    <interactant intactId="EBI-3920694">
        <id>Q9NR31</id>
    </interactant>
    <interactant intactId="EBI-930964">
        <id>P54253</id>
        <label>ATXN1</label>
    </interactant>
    <organismsDiffer>false</organismsDiffer>
    <experiments>3</experiments>
</comment>
<comment type="interaction">
    <interactant intactId="EBI-3920694">
        <id>Q9NR31</id>
    </interactant>
    <interactant intactId="EBI-707714">
        <id>Q92843</id>
        <label>BCL2L2</label>
    </interactant>
    <organismsDiffer>false</organismsDiffer>
    <experiments>3</experiments>
</comment>
<comment type="interaction">
    <interactant intactId="EBI-3920694">
        <id>Q9NR31</id>
    </interactant>
    <interactant intactId="EBI-6657396">
        <id>P19397</id>
        <label>CD53</label>
    </interactant>
    <organismsDiffer>false</organismsDiffer>
    <experiments>3</experiments>
</comment>
<comment type="interaction">
    <interactant intactId="EBI-3920694">
        <id>Q9NR31</id>
    </interactant>
    <interactant intactId="EBI-712921">
        <id>P60033</id>
        <label>CD81</label>
    </interactant>
    <organismsDiffer>false</organismsDiffer>
    <experiments>3</experiments>
</comment>
<comment type="interaction">
    <interactant intactId="EBI-3920694">
        <id>Q9NR31</id>
    </interactant>
    <interactant intactId="EBI-12360993">
        <id>P23141-3</id>
        <label>CES1</label>
    </interactant>
    <organismsDiffer>false</organismsDiffer>
    <experiments>3</experiments>
</comment>
<comment type="interaction">
    <interactant intactId="EBI-3920694">
        <id>Q9NR31</id>
    </interactant>
    <interactant intactId="EBI-12256978">
        <id>Q8N6F1-2</id>
        <label>CLDN19</label>
    </interactant>
    <organismsDiffer>false</organismsDiffer>
    <experiments>3</experiments>
</comment>
<comment type="interaction">
    <interactant intactId="EBI-3920694">
        <id>Q9NR31</id>
    </interactant>
    <interactant intactId="EBI-11959453">
        <id>Q8NHS1</id>
        <label>CLDND2</label>
    </interactant>
    <organismsDiffer>false</organismsDiffer>
    <experiments>3</experiments>
</comment>
<comment type="interaction">
    <interactant intactId="EBI-3920694">
        <id>Q9NR31</id>
    </interactant>
    <interactant intactId="EBI-11989440">
        <id>Q9BXN2-6</id>
        <label>CLEC7A</label>
    </interactant>
    <organismsDiffer>false</organismsDiffer>
    <experiments>3</experiments>
</comment>
<comment type="interaction">
    <interactant intactId="EBI-3920694">
        <id>Q9NR31</id>
    </interactant>
    <interactant intactId="EBI-11522780">
        <id>Q96DZ9-2</id>
        <label>CMTM5</label>
    </interactant>
    <organismsDiffer>false</organismsDiffer>
    <experiments>3</experiments>
</comment>
<comment type="interaction">
    <interactant intactId="EBI-3920694">
        <id>Q9NR31</id>
    </interactant>
    <interactant intactId="EBI-12211159">
        <id>P29400-2</id>
        <label>COL4A5</label>
    </interactant>
    <organismsDiffer>false</organismsDiffer>
    <experiments>3</experiments>
</comment>
<comment type="interaction">
    <interactant intactId="EBI-3920694">
        <id>Q9NR31</id>
    </interactant>
    <interactant intactId="EBI-3907816">
        <id>P54852</id>
        <label>EMP3</label>
    </interactant>
    <organismsDiffer>false</organismsDiffer>
    <experiments>3</experiments>
</comment>
<comment type="interaction">
    <interactant intactId="EBI-3920694">
        <id>Q9NR31</id>
    </interactant>
    <interactant intactId="EBI-711490">
        <id>Q9UKR5</id>
        <label>ERG28</label>
    </interactant>
    <organismsDiffer>false</organismsDiffer>
    <experiments>3</experiments>
</comment>
<comment type="interaction">
    <interactant intactId="EBI-3920694">
        <id>Q9NR31</id>
    </interactant>
    <interactant intactId="EBI-2876774">
        <id>Q92520</id>
        <label>FAM3C</label>
    </interactant>
    <organismsDiffer>false</organismsDiffer>
    <experiments>3</experiments>
</comment>
<comment type="interaction">
    <interactant intactId="EBI-3920694">
        <id>Q9NR31</id>
    </interactant>
    <interactant intactId="EBI-11991950">
        <id>Q8WWP7</id>
        <label>GIMAP1</label>
    </interactant>
    <organismsDiffer>false</organismsDiffer>
    <experiments>3</experiments>
</comment>
<comment type="interaction">
    <interactant intactId="EBI-3920694">
        <id>Q9NR31</id>
    </interactant>
    <interactant intactId="EBI-3905204">
        <id>P29033</id>
        <label>GJB2</label>
    </interactant>
    <organismsDiffer>false</organismsDiffer>
    <experiments>3</experiments>
</comment>
<comment type="interaction">
    <interactant intactId="EBI-3920694">
        <id>Q9NR31</id>
    </interactant>
    <interactant intactId="EBI-4402607">
        <id>Q9Y3E0</id>
        <label>GOLT1B</label>
    </interactant>
    <organismsDiffer>false</organismsDiffer>
    <experiments>3</experiments>
</comment>
<comment type="interaction">
    <interactant intactId="EBI-3920694">
        <id>Q9NR31</id>
    </interactant>
    <interactant intactId="EBI-10232876">
        <id>Q14416</id>
        <label>GRM2</label>
    </interactant>
    <organismsDiffer>false</organismsDiffer>
    <experiments>3</experiments>
</comment>
<comment type="interaction">
    <interactant intactId="EBI-3920694">
        <id>Q9NR31</id>
    </interactant>
    <interactant intactId="EBI-702665">
        <id>P02724</id>
        <label>GYPA</label>
    </interactant>
    <organismsDiffer>false</organismsDiffer>
    <experiments>3</experiments>
</comment>
<comment type="interaction">
    <interactant intactId="EBI-3920694">
        <id>Q9NR31</id>
    </interactant>
    <interactant intactId="EBI-712096">
        <id>P30519</id>
        <label>HMOX2</label>
    </interactant>
    <organismsDiffer>false</organismsDiffer>
    <experiments>3</experiments>
</comment>
<comment type="interaction">
    <interactant intactId="EBI-3920694">
        <id>Q9NR31</id>
    </interactant>
    <interactant intactId="EBI-10266796">
        <id>Q8N5M9</id>
        <label>JAGN1</label>
    </interactant>
    <organismsDiffer>false</organismsDiffer>
    <experiments>3</experiments>
</comment>
<comment type="interaction">
    <interactant intactId="EBI-3920694">
        <id>Q9NR31</id>
    </interactant>
    <interactant intactId="EBI-8070286">
        <id>O43561-2</id>
        <label>LAT</label>
    </interactant>
    <organismsDiffer>false</organismsDiffer>
    <experiments>3</experiments>
</comment>
<comment type="interaction">
    <interactant intactId="EBI-3920694">
        <id>Q9NR31</id>
    </interactant>
    <interactant intactId="EBI-2820517">
        <id>Q8TAF8</id>
        <label>LHFPL5</label>
    </interactant>
    <organismsDiffer>false</organismsDiffer>
    <experiments>3</experiments>
</comment>
<comment type="interaction">
    <interactant intactId="EBI-3920694">
        <id>Q9NR31</id>
    </interactant>
    <interactant intactId="EBI-2341610">
        <id>Q9NX47</id>
        <label>MARCHF5</label>
    </interactant>
    <organismsDiffer>false</organismsDiffer>
    <experiments>3</experiments>
</comment>
<comment type="interaction">
    <interactant intactId="EBI-3920694">
        <id>Q9NR31</id>
    </interactant>
    <interactant intactId="EBI-8449636">
        <id>P30301</id>
        <label>MIP</label>
    </interactant>
    <organismsDiffer>false</organismsDiffer>
    <experiments>3</experiments>
</comment>
<comment type="interaction">
    <interactant intactId="EBI-3920694">
        <id>Q9NR31</id>
    </interactant>
    <interactant intactId="EBI-12179105">
        <id>O75425</id>
        <label>MOSPD3</label>
    </interactant>
    <organismsDiffer>false</organismsDiffer>
    <experiments>3</experiments>
</comment>
<comment type="interaction">
    <interactant intactId="EBI-3920694">
        <id>Q9NR31</id>
    </interactant>
    <interactant intactId="EBI-2863634">
        <id>Q9UHE5</id>
        <label>NAT8</label>
    </interactant>
    <organismsDiffer>false</organismsDiffer>
    <experiments>3</experiments>
</comment>
<comment type="interaction">
    <interactant intactId="EBI-3920694">
        <id>Q9NR31</id>
    </interactant>
    <interactant intactId="EBI-12051377">
        <id>Q8N912</id>
        <label>NRAC</label>
    </interactant>
    <organismsDiffer>false</organismsDiffer>
    <experiments>3</experiments>
</comment>
<comment type="interaction">
    <interactant intactId="EBI-3920694">
        <id>Q9NR31</id>
    </interactant>
    <interactant intactId="EBI-10262547">
        <id>Q8IXM6</id>
        <label>NRM</label>
    </interactant>
    <organismsDiffer>false</organismsDiffer>
    <experiments>3</experiments>
</comment>
<comment type="interaction">
    <interactant intactId="EBI-3920694">
        <id>Q9NR31</id>
    </interactant>
    <interactant intactId="EBI-1054848">
        <id>Q9P0S3</id>
        <label>ORMDL1</label>
    </interactant>
    <organismsDiffer>false</organismsDiffer>
    <experiments>3</experiments>
</comment>
<comment type="interaction">
    <interactant intactId="EBI-3920694">
        <id>Q9NR31</id>
    </interactant>
    <interactant intactId="EBI-3919291">
        <id>Q9Y342</id>
        <label>PLLP</label>
    </interactant>
    <organismsDiffer>false</organismsDiffer>
    <experiments>3</experiments>
</comment>
<comment type="interaction">
    <interactant intactId="EBI-3920694">
        <id>Q9NR31</id>
    </interactant>
    <interactant intactId="EBI-692836">
        <id>P26678</id>
        <label>PLN</label>
    </interactant>
    <organismsDiffer>false</organismsDiffer>
    <experiments>3</experiments>
</comment>
<comment type="interaction">
    <interactant intactId="EBI-3920694">
        <id>Q9NR31</id>
    </interactant>
    <interactant intactId="EBI-608347">
        <id>Q04941</id>
        <label>PLP2</label>
    </interactant>
    <organismsDiffer>false</organismsDiffer>
    <experiments>3</experiments>
</comment>
<comment type="interaction">
    <interactant intactId="EBI-3920694">
        <id>Q9NR31</id>
    </interactant>
    <interactant intactId="EBI-10485931">
        <id>Q5VZY2</id>
        <label>PLPP4</label>
    </interactant>
    <organismsDiffer>false</organismsDiffer>
    <experiments>3</experiments>
</comment>
<comment type="interaction">
    <interactant intactId="EBI-3920694">
        <id>Q9NR31</id>
    </interactant>
    <interactant intactId="EBI-14210385">
        <id>Q59EV6</id>
        <label>PPGB</label>
    </interactant>
    <organismsDiffer>false</organismsDiffer>
    <experiments>3</experiments>
</comment>
<comment type="interaction">
    <interactant intactId="EBI-3920694">
        <id>Q9NR31</id>
    </interactant>
    <interactant intactId="EBI-1396563">
        <id>Q8IXI1</id>
        <label>RHOT2</label>
    </interactant>
    <organismsDiffer>false</organismsDiffer>
    <experiments>3</experiments>
</comment>
<comment type="interaction">
    <interactant intactId="EBI-3920694">
        <id>Q9NR31</id>
    </interactant>
    <interactant intactId="EBI-2806908">
        <id>Q96LZ7</id>
        <label>RMDN2</label>
    </interactant>
    <organismsDiffer>false</organismsDiffer>
    <experiments>3</experiments>
</comment>
<comment type="interaction">
    <interactant intactId="EBI-3920694">
        <id>Q9NR31</id>
    </interactant>
    <interactant intactId="EBI-4290665">
        <id>Q9Y6B6</id>
        <label>SAR1B</label>
    </interactant>
    <organismsDiffer>false</organismsDiffer>
    <experiments>3</experiments>
</comment>
<comment type="interaction">
    <interactant intactId="EBI-3920694">
        <id>Q9NR31</id>
    </interactant>
    <interactant intactId="EBI-8652744">
        <id>Q96IW7</id>
        <label>SEC22A</label>
    </interactant>
    <organismsDiffer>false</organismsDiffer>
    <experiments>3</experiments>
</comment>
<comment type="interaction">
    <interactant intactId="EBI-3920694">
        <id>Q9NR31</id>
    </interactant>
    <interactant intactId="EBI-10329948">
        <id>Q9Y6X1</id>
        <label>SERP1</label>
    </interactant>
    <organismsDiffer>false</organismsDiffer>
    <experiments>3</experiments>
</comment>
<comment type="interaction">
    <interactant intactId="EBI-3920694">
        <id>Q9NR31</id>
    </interactant>
    <interactant intactId="EBI-10262251">
        <id>Q8IWU4</id>
        <label>SLC30A8</label>
    </interactant>
    <organismsDiffer>false</organismsDiffer>
    <experiments>3</experiments>
</comment>
<comment type="interaction">
    <interactant intactId="EBI-3920694">
        <id>Q9NR31</id>
    </interactant>
    <interactant intactId="EBI-12870360">
        <id>P78382</id>
        <label>SLC35A1</label>
    </interactant>
    <organismsDiffer>false</organismsDiffer>
    <experiments>3</experiments>
</comment>
<comment type="interaction">
    <interactant intactId="EBI-3920694">
        <id>Q9NR31</id>
    </interactant>
    <interactant intactId="EBI-10314552">
        <id>Q9NVC3</id>
        <label>SLC38A7</label>
    </interactant>
    <organismsDiffer>false</organismsDiffer>
    <experiments>3</experiments>
</comment>
<comment type="interaction">
    <interactant intactId="EBI-3920694">
        <id>Q9NR31</id>
    </interactant>
    <interactant intactId="EBI-12188413">
        <id>B2RUZ4</id>
        <label>SMIM1</label>
    </interactant>
    <organismsDiffer>false</organismsDiffer>
    <experiments>3</experiments>
</comment>
<comment type="interaction">
    <interactant intactId="EBI-3920694">
        <id>Q9NR31</id>
    </interactant>
    <interactant intactId="EBI-10244848">
        <id>Q5SQN1</id>
        <label>SNAP47</label>
    </interactant>
    <organismsDiffer>false</organismsDiffer>
    <experiments>3</experiments>
</comment>
<comment type="interaction">
    <interactant intactId="EBI-3920694">
        <id>Q9NR31</id>
    </interactant>
    <interactant intactId="EBI-3221827">
        <id>O15400</id>
        <label>STX7</label>
    </interactant>
    <organismsDiffer>false</organismsDiffer>
    <experiments>3</experiments>
</comment>
<comment type="interaction">
    <interactant intactId="EBI-3920694">
        <id>Q9NR31</id>
    </interactant>
    <interactant intactId="EBI-727240">
        <id>Q9UNK0</id>
        <label>STX8</label>
    </interactant>
    <organismsDiffer>false</organismsDiffer>
    <experiments>3</experiments>
</comment>
<comment type="interaction">
    <interactant intactId="EBI-3920694">
        <id>Q9NR31</id>
    </interactant>
    <interactant intactId="EBI-12845616">
        <id>Q6UX40</id>
        <label>TMEM107</label>
    </interactant>
    <organismsDiffer>false</organismsDiffer>
    <experiments>3</experiments>
</comment>
<comment type="interaction">
    <interactant intactId="EBI-3920694">
        <id>Q9NR31</id>
    </interactant>
    <interactant intactId="EBI-1057733">
        <id>Q9BVC6</id>
        <label>TMEM109</label>
    </interactant>
    <organismsDiffer>false</organismsDiffer>
    <experiments>3</experiments>
</comment>
<comment type="interaction">
    <interactant intactId="EBI-3920694">
        <id>Q9NR31</id>
    </interactant>
    <interactant intactId="EBI-13046724">
        <id>Q14656</id>
        <label>TMEM187</label>
    </interactant>
    <organismsDiffer>false</organismsDiffer>
    <experiments>3</experiments>
</comment>
<comment type="interaction">
    <interactant intactId="EBI-3920694">
        <id>Q9NR31</id>
    </interactant>
    <interactant intactId="EBI-10173151">
        <id>A2RU14</id>
        <label>TMEM218</label>
    </interactant>
    <organismsDiffer>false</organismsDiffer>
    <experiments>3</experiments>
</comment>
<comment type="interaction">
    <interactant intactId="EBI-3920694">
        <id>Q9NR31</id>
    </interactant>
    <interactant intactId="EBI-12887458">
        <id>Q9BU79</id>
        <label>TMEM243</label>
    </interactant>
    <organismsDiffer>false</organismsDiffer>
    <experiments>3</experiments>
</comment>
<comment type="interaction">
    <interactant intactId="EBI-3920694">
        <id>Q9NR31</id>
    </interactant>
    <interactant intactId="EBI-11956809">
        <id>Q8TBM7</id>
        <label>TMEM254</label>
    </interactant>
    <organismsDiffer>false</organismsDiffer>
    <experiments>3</experiments>
</comment>
<comment type="interaction">
    <interactant intactId="EBI-3920694">
        <id>Q9NR31</id>
    </interactant>
    <interactant intactId="EBI-17555467">
        <id>Q0VDI3</id>
        <label>TMEM267</label>
    </interactant>
    <organismsDiffer>false</organismsDiffer>
    <experiments>3</experiments>
</comment>
<comment type="interaction">
    <interactant intactId="EBI-3920694">
        <id>Q9NR31</id>
    </interactant>
    <interactant intactId="EBI-12038591">
        <id>Q69YG0</id>
        <label>TMEM42</label>
    </interactant>
    <organismsDiffer>false</organismsDiffer>
    <experiments>3</experiments>
</comment>
<comment type="interaction">
    <interactant intactId="EBI-3920694">
        <id>Q9NR31</id>
    </interactant>
    <interactant intactId="EBI-2852148">
        <id>Q9H2L4</id>
        <label>TMEM60</label>
    </interactant>
    <organismsDiffer>false</organismsDiffer>
    <experiments>3</experiments>
</comment>
<comment type="interaction">
    <interactant intactId="EBI-3920694">
        <id>Q9NR31</id>
    </interactant>
    <interactant intactId="EBI-12111910">
        <id>Q5BJF2</id>
        <label>TMEM97</label>
    </interactant>
    <organismsDiffer>false</organismsDiffer>
    <experiments>3</experiments>
</comment>
<comment type="interaction">
    <interactant intactId="EBI-3920694">
        <id>Q9NR31</id>
    </interactant>
    <interactant intactId="EBI-11996766">
        <id>Q8N609</id>
        <label>TRAM1L1</label>
    </interactant>
    <organismsDiffer>false</organismsDiffer>
    <experiments>3</experiments>
</comment>
<comment type="interaction">
    <interactant intactId="EBI-3920694">
        <id>Q9NR31</id>
    </interactant>
    <interactant intactId="EBI-10243654">
        <id>Q5BVD1</id>
        <label>TTMP</label>
    </interactant>
    <organismsDiffer>false</organismsDiffer>
    <experiments>3</experiments>
</comment>
<comment type="interaction">
    <interactant intactId="EBI-3920694">
        <id>Q9NR31</id>
    </interactant>
    <interactant intactId="EBI-10210710">
        <id>P49638</id>
        <label>TTPA</label>
    </interactant>
    <organismsDiffer>false</organismsDiffer>
    <experiments>3</experiments>
</comment>
<comment type="interaction">
    <interactant intactId="EBI-3920694">
        <id>Q9NR31</id>
    </interactant>
    <interactant intactId="EBI-2819725">
        <id>Q9Y5Z9</id>
        <label>UBIAD1</label>
    </interactant>
    <organismsDiffer>false</organismsDiffer>
    <experiments>3</experiments>
</comment>
<comment type="interaction">
    <interactant intactId="EBI-3920694">
        <id>Q9NR31</id>
    </interactant>
    <interactant intactId="EBI-7601760">
        <id>Q53HI1</id>
        <label>UNC50</label>
    </interactant>
    <organismsDiffer>false</organismsDiffer>
    <experiments>3</experiments>
</comment>
<comment type="interaction">
    <interactant intactId="EBI-3920694">
        <id>Q9NR31</id>
    </interactant>
    <interactant intactId="EBI-12237619">
        <id>O75841</id>
        <label>UPK1B</label>
    </interactant>
    <organismsDiffer>false</organismsDiffer>
    <experiments>3</experiments>
</comment>
<comment type="interaction">
    <interactant intactId="EBI-3920694">
        <id>Q9NR31</id>
    </interactant>
    <interactant intactId="EBI-722343">
        <id>Q15836</id>
        <label>VAMP3</label>
    </interactant>
    <organismsDiffer>false</organismsDiffer>
    <experiments>3</experiments>
</comment>
<comment type="interaction">
    <interactant intactId="EBI-3920694">
        <id>Q9NR31</id>
    </interactant>
    <interactant intactId="EBI-744953">
        <id>O75379</id>
        <label>VAMP4</label>
    </interactant>
    <organismsDiffer>false</organismsDiffer>
    <experiments>3</experiments>
</comment>
<comment type="interaction">
    <interactant intactId="EBI-3920694">
        <id>Q9NR31</id>
    </interactant>
    <interactant intactId="EBI-10191195">
        <id>O95183</id>
        <label>VAMP5</label>
    </interactant>
    <organismsDiffer>false</organismsDiffer>
    <experiments>3</experiments>
</comment>
<comment type="interaction">
    <interactant intactId="EBI-3920694">
        <id>Q9NR31</id>
    </interactant>
    <interactant intactId="EBI-6256462">
        <id>Q9BQB6</id>
        <label>VKORC1</label>
    </interactant>
    <organismsDiffer>false</organismsDiffer>
    <experiments>3</experiments>
</comment>
<comment type="interaction">
    <interactant intactId="EBI-3920694">
        <id>Q9NR31</id>
    </interactant>
    <interactant intactId="EBI-775901">
        <id>Q01405</id>
        <label>Sec23a</label>
    </interactant>
    <organismsDiffer>true</organismsDiffer>
    <experiments>2</experiments>
</comment>
<comment type="subcellular location">
    <subcellularLocation>
        <location evidence="5 6">Endoplasmic reticulum membrane</location>
        <topology evidence="12 13">Peripheral membrane protein</topology>
    </subcellularLocation>
    <subcellularLocation>
        <location evidence="14">Golgi apparatus</location>
        <location evidence="14">Golgi stack membrane</location>
        <topology evidence="14">Peripheral membrane protein</topology>
    </subcellularLocation>
    <subcellularLocation>
        <location evidence="8">Cytoplasm</location>
        <location evidence="8">Cytosol</location>
    </subcellularLocation>
    <subcellularLocation>
        <location evidence="14">Lysosome membrane</location>
    </subcellularLocation>
    <text evidence="5 6 14">Active at endoplasmic reticulum exit sites (ERES) where it inserts into the membrane and recruits the remainder of the coat protein complex II/COPII (PubMed:23433038, PubMed:32358066). Upon leucine deprivation, associates with lysosomal membranes to repress TORC1 signaling (Probable).</text>
</comment>
<comment type="alternative products">
    <event type="alternative splicing"/>
    <isoform>
        <id>Q9NR31-1</id>
        <name>1</name>
        <sequence type="displayed"/>
    </isoform>
    <isoform>
        <id>Q9NR31-2</id>
        <name>2</name>
        <sequence type="described" ref="VSP_056220"/>
    </isoform>
</comment>
<comment type="similarity">
    <text evidence="11">Belongs to the small GTPase superfamily. SAR1 family.</text>
</comment>
<organism>
    <name type="scientific">Homo sapiens</name>
    <name type="common">Human</name>
    <dbReference type="NCBI Taxonomy" id="9606"/>
    <lineage>
        <taxon>Eukaryota</taxon>
        <taxon>Metazoa</taxon>
        <taxon>Chordata</taxon>
        <taxon>Craniata</taxon>
        <taxon>Vertebrata</taxon>
        <taxon>Euteleostomi</taxon>
        <taxon>Mammalia</taxon>
        <taxon>Eutheria</taxon>
        <taxon>Euarchontoglires</taxon>
        <taxon>Primates</taxon>
        <taxon>Haplorrhini</taxon>
        <taxon>Catarrhini</taxon>
        <taxon>Hominidae</taxon>
        <taxon>Homo</taxon>
    </lineage>
</organism>
<protein>
    <recommendedName>
        <fullName evidence="13">Small COPII coat GTPase SAR1A</fullName>
        <ecNumber evidence="6 9">3.6.5.2</ecNumber>
    </recommendedName>
    <alternativeName>
        <fullName>COPII-associated small GTPase</fullName>
    </alternativeName>
    <alternativeName>
        <fullName evidence="16">Secretion-associated Ras-related GTPase 1A</fullName>
    </alternativeName>
</protein>
<accession>Q9NR31</accession>
<accession>B4DQ19</accession>
<proteinExistence type="evidence at protein level"/>
<gene>
    <name evidence="16" type="primary">SAR1A</name>
    <name type="synonym">SAR1</name>
    <name type="synonym">SARA</name>
    <name type="synonym">SARA1</name>
</gene>
<evidence type="ECO:0000250" key="1">
    <source>
        <dbReference type="UniProtKB" id="Q9QVY3"/>
    </source>
</evidence>
<evidence type="ECO:0000250" key="2">
    <source>
        <dbReference type="UniProtKB" id="Q9Y6B6"/>
    </source>
</evidence>
<evidence type="ECO:0000269" key="3">
    <source>
    </source>
</evidence>
<evidence type="ECO:0000269" key="4">
    <source>
    </source>
</evidence>
<evidence type="ECO:0000269" key="5">
    <source>
    </source>
</evidence>
<evidence type="ECO:0000269" key="6">
    <source>
    </source>
</evidence>
<evidence type="ECO:0000269" key="7">
    <source>
    </source>
</evidence>
<evidence type="ECO:0000269" key="8">
    <source>
    </source>
</evidence>
<evidence type="ECO:0000269" key="9">
    <source>
    </source>
</evidence>
<evidence type="ECO:0000303" key="10">
    <source>
    </source>
</evidence>
<evidence type="ECO:0000305" key="11"/>
<evidence type="ECO:0000305" key="12">
    <source>
    </source>
</evidence>
<evidence type="ECO:0000305" key="13">
    <source>
    </source>
</evidence>
<evidence type="ECO:0000305" key="14">
    <source>
    </source>
</evidence>
<evidence type="ECO:0000305" key="15">
    <source>
    </source>
</evidence>
<evidence type="ECO:0000312" key="16">
    <source>
        <dbReference type="HGNC" id="HGNC:10534"/>
    </source>
</evidence>
<evidence type="ECO:0007744" key="17">
    <source>
        <dbReference type="PDB" id="8DZM"/>
    </source>
</evidence>
<evidence type="ECO:0007744" key="18">
    <source>
        <dbReference type="PDB" id="8DZN"/>
    </source>
</evidence>
<evidence type="ECO:0007744" key="19">
    <source>
        <dbReference type="PDB" id="8DZO"/>
    </source>
</evidence>
<evidence type="ECO:0007744" key="20">
    <source>
        <dbReference type="PDB" id="8DZT"/>
    </source>
</evidence>
<evidence type="ECO:0007744" key="21">
    <source>
        <dbReference type="PDB" id="8E0H"/>
    </source>
</evidence>
<evidence type="ECO:0007744" key="22">
    <source>
    </source>
</evidence>
<evidence type="ECO:0007744" key="23">
    <source>
    </source>
</evidence>
<evidence type="ECO:0007744" key="24">
    <source>
    </source>
</evidence>
<evidence type="ECO:0007829" key="25">
    <source>
        <dbReference type="PDB" id="2GAO"/>
    </source>
</evidence>
<evidence type="ECO:0007829" key="26">
    <source>
        <dbReference type="PDB" id="8DZM"/>
    </source>
</evidence>
<evidence type="ECO:0007829" key="27">
    <source>
        <dbReference type="PDB" id="8DZO"/>
    </source>
</evidence>
<dbReference type="EC" id="3.6.5.2" evidence="6 9"/>
<dbReference type="EMBL" id="AF261717">
    <property type="protein sequence ID" value="AAF81741.1"/>
    <property type="molecule type" value="mRNA"/>
</dbReference>
<dbReference type="EMBL" id="AL136724">
    <property type="protein sequence ID" value="CAB66658.1"/>
    <property type="molecule type" value="mRNA"/>
</dbReference>
<dbReference type="EMBL" id="AY008268">
    <property type="protein sequence ID" value="AAG16638.1"/>
    <property type="molecule type" value="mRNA"/>
</dbReference>
<dbReference type="EMBL" id="AK298591">
    <property type="protein sequence ID" value="BAG60781.1"/>
    <property type="molecule type" value="mRNA"/>
</dbReference>
<dbReference type="EMBL" id="AL731540">
    <property type="status" value="NOT_ANNOTATED_CDS"/>
    <property type="molecule type" value="Genomic_DNA"/>
</dbReference>
<dbReference type="EMBL" id="BC003658">
    <property type="protein sequence ID" value="AAH03658.1"/>
    <property type="molecule type" value="mRNA"/>
</dbReference>
<dbReference type="CCDS" id="CCDS7298.1">
    <molecule id="Q9NR31-1"/>
</dbReference>
<dbReference type="RefSeq" id="NP_001136120.1">
    <molecule id="Q9NR31-1"/>
    <property type="nucleotide sequence ID" value="NM_001142648.2"/>
</dbReference>
<dbReference type="RefSeq" id="NP_064535.1">
    <molecule id="Q9NR31-1"/>
    <property type="nucleotide sequence ID" value="NM_020150.5"/>
</dbReference>
<dbReference type="PDB" id="2GAO">
    <property type="method" value="X-ray"/>
    <property type="resolution" value="2.00 A"/>
    <property type="chains" value="A/B=10-198"/>
</dbReference>
<dbReference type="PDB" id="8DZM">
    <property type="method" value="X-ray"/>
    <property type="resolution" value="1.65 A"/>
    <property type="chains" value="A/B=1-198"/>
</dbReference>
<dbReference type="PDB" id="8DZN">
    <property type="method" value="X-ray"/>
    <property type="resolution" value="2.11 A"/>
    <property type="chains" value="A/B=1-198"/>
</dbReference>
<dbReference type="PDB" id="8DZO">
    <property type="method" value="X-ray"/>
    <property type="resolution" value="1.80 A"/>
    <property type="chains" value="A/B=1-198"/>
</dbReference>
<dbReference type="PDB" id="8DZT">
    <property type="method" value="X-ray"/>
    <property type="resolution" value="1.80 A"/>
    <property type="chains" value="A/B=1-198"/>
</dbReference>
<dbReference type="PDB" id="8E0H">
    <property type="method" value="X-ray"/>
    <property type="resolution" value="2.00 A"/>
    <property type="chains" value="A/B=1-198"/>
</dbReference>
<dbReference type="PDBsum" id="2GAO"/>
<dbReference type="PDBsum" id="8DZM"/>
<dbReference type="PDBsum" id="8DZN"/>
<dbReference type="PDBsum" id="8DZO"/>
<dbReference type="PDBsum" id="8DZT"/>
<dbReference type="PDBsum" id="8E0H"/>
<dbReference type="SMR" id="Q9NR31"/>
<dbReference type="BioGRID" id="121186">
    <property type="interactions" value="338"/>
</dbReference>
<dbReference type="ComplexPortal" id="CPX-2360">
    <property type="entry name" value="COPII vesicle coat complex"/>
</dbReference>
<dbReference type="DIP" id="DIP-59790N"/>
<dbReference type="FunCoup" id="Q9NR31">
    <property type="interactions" value="1779"/>
</dbReference>
<dbReference type="IntAct" id="Q9NR31">
    <property type="interactions" value="106"/>
</dbReference>
<dbReference type="MINT" id="Q9NR31"/>
<dbReference type="STRING" id="9606.ENSP00000362339"/>
<dbReference type="ChEMBL" id="CHEMBL4295960"/>
<dbReference type="GlyGen" id="Q9NR31">
    <property type="glycosylation" value="1 site, 1 O-linked glycan (1 site)"/>
</dbReference>
<dbReference type="iPTMnet" id="Q9NR31"/>
<dbReference type="PhosphoSitePlus" id="Q9NR31"/>
<dbReference type="SwissPalm" id="Q9NR31"/>
<dbReference type="BioMuta" id="SAR1A"/>
<dbReference type="DMDM" id="14548013"/>
<dbReference type="OGP" id="Q9NR31"/>
<dbReference type="jPOST" id="Q9NR31"/>
<dbReference type="MassIVE" id="Q9NR31"/>
<dbReference type="PaxDb" id="9606-ENSP00000362339"/>
<dbReference type="PeptideAtlas" id="Q9NR31"/>
<dbReference type="ProteomicsDB" id="4836"/>
<dbReference type="ProteomicsDB" id="82267">
    <molecule id="Q9NR31-1"/>
</dbReference>
<dbReference type="Pumba" id="Q9NR31"/>
<dbReference type="TopDownProteomics" id="Q9NR31-1">
    <molecule id="Q9NR31-1"/>
</dbReference>
<dbReference type="Antibodypedia" id="1887">
    <property type="antibodies" value="202 antibodies from 35 providers"/>
</dbReference>
<dbReference type="DNASU" id="56681"/>
<dbReference type="Ensembl" id="ENST00000373238.5">
    <molecule id="Q9NR31-1"/>
    <property type="protein sequence ID" value="ENSP00000362335.1"/>
    <property type="gene ID" value="ENSG00000079332.16"/>
</dbReference>
<dbReference type="Ensembl" id="ENST00000373241.9">
    <molecule id="Q9NR31-1"/>
    <property type="protein sequence ID" value="ENSP00000362338.4"/>
    <property type="gene ID" value="ENSG00000079332.16"/>
</dbReference>
<dbReference type="Ensembl" id="ENST00000373242.6">
    <molecule id="Q9NR31-1"/>
    <property type="protein sequence ID" value="ENSP00000362339.1"/>
    <property type="gene ID" value="ENSG00000079332.16"/>
</dbReference>
<dbReference type="GeneID" id="56681"/>
<dbReference type="KEGG" id="hsa:56681"/>
<dbReference type="MANE-Select" id="ENST00000373241.9">
    <property type="protein sequence ID" value="ENSP00000362338.4"/>
    <property type="RefSeq nucleotide sequence ID" value="NM_020150.5"/>
    <property type="RefSeq protein sequence ID" value="NP_064535.1"/>
</dbReference>
<dbReference type="UCSC" id="uc010qjh.3">
    <molecule id="Q9NR31-1"/>
    <property type="organism name" value="human"/>
</dbReference>
<dbReference type="AGR" id="HGNC:10534"/>
<dbReference type="CTD" id="56681"/>
<dbReference type="DisGeNET" id="56681"/>
<dbReference type="GeneCards" id="SAR1A"/>
<dbReference type="HGNC" id="HGNC:10534">
    <property type="gene designation" value="SAR1A"/>
</dbReference>
<dbReference type="HPA" id="ENSG00000079332">
    <property type="expression patterns" value="Low tissue specificity"/>
</dbReference>
<dbReference type="MIM" id="607691">
    <property type="type" value="gene"/>
</dbReference>
<dbReference type="neXtProt" id="NX_Q9NR31"/>
<dbReference type="OpenTargets" id="ENSG00000079332"/>
<dbReference type="PharmGKB" id="PA34942"/>
<dbReference type="VEuPathDB" id="HostDB:ENSG00000079332"/>
<dbReference type="eggNOG" id="KOG0077">
    <property type="taxonomic scope" value="Eukaryota"/>
</dbReference>
<dbReference type="GeneTree" id="ENSGT00940000155276"/>
<dbReference type="HOGENOM" id="CLU_040729_6_0_1"/>
<dbReference type="InParanoid" id="Q9NR31"/>
<dbReference type="OMA" id="GLWNKHG"/>
<dbReference type="OrthoDB" id="15478at2759"/>
<dbReference type="PAN-GO" id="Q9NR31">
    <property type="GO annotations" value="9 GO annotations based on evolutionary models"/>
</dbReference>
<dbReference type="PhylomeDB" id="Q9NR31"/>
<dbReference type="TreeFam" id="TF312890"/>
<dbReference type="PathwayCommons" id="Q9NR31"/>
<dbReference type="SignaLink" id="Q9NR31"/>
<dbReference type="SIGNOR" id="Q9NR31"/>
<dbReference type="BioGRID-ORCS" id="56681">
    <property type="hits" value="64 hits in 1135 CRISPR screens"/>
</dbReference>
<dbReference type="CD-CODE" id="91857CE7">
    <property type="entry name" value="Nucleolus"/>
</dbReference>
<dbReference type="CD-CODE" id="FB4E32DD">
    <property type="entry name" value="Presynaptic clusters and postsynaptic densities"/>
</dbReference>
<dbReference type="ChiTaRS" id="SAR1A">
    <property type="organism name" value="human"/>
</dbReference>
<dbReference type="EvolutionaryTrace" id="Q9NR31"/>
<dbReference type="GenomeRNAi" id="56681"/>
<dbReference type="Pharos" id="Q9NR31">
    <property type="development level" value="Tbio"/>
</dbReference>
<dbReference type="PRO" id="PR:Q9NR31"/>
<dbReference type="Proteomes" id="UP000005640">
    <property type="component" value="Chromosome 10"/>
</dbReference>
<dbReference type="RNAct" id="Q9NR31">
    <property type="molecule type" value="protein"/>
</dbReference>
<dbReference type="Bgee" id="ENSG00000079332">
    <property type="expression patterns" value="Expressed in calcaneal tendon and 220 other cell types or tissues"/>
</dbReference>
<dbReference type="ExpressionAtlas" id="Q9NR31">
    <property type="expression patterns" value="baseline and differential"/>
</dbReference>
<dbReference type="GO" id="GO:0030127">
    <property type="term" value="C:COPII vesicle coat"/>
    <property type="evidence" value="ECO:0000314"/>
    <property type="project" value="UniProtKB"/>
</dbReference>
<dbReference type="GO" id="GO:0005829">
    <property type="term" value="C:cytosol"/>
    <property type="evidence" value="ECO:0007669"/>
    <property type="project" value="UniProtKB-SubCell"/>
</dbReference>
<dbReference type="GO" id="GO:0070971">
    <property type="term" value="C:endoplasmic reticulum exit site"/>
    <property type="evidence" value="ECO:0000314"/>
    <property type="project" value="UniProt"/>
</dbReference>
<dbReference type="GO" id="GO:0005789">
    <property type="term" value="C:endoplasmic reticulum membrane"/>
    <property type="evidence" value="ECO:0007669"/>
    <property type="project" value="UniProtKB-SubCell"/>
</dbReference>
<dbReference type="GO" id="GO:0032580">
    <property type="term" value="C:Golgi cisterna membrane"/>
    <property type="evidence" value="ECO:0007669"/>
    <property type="project" value="UniProtKB-SubCell"/>
</dbReference>
<dbReference type="GO" id="GO:0005765">
    <property type="term" value="C:lysosomal membrane"/>
    <property type="evidence" value="ECO:0000314"/>
    <property type="project" value="UniProt"/>
</dbReference>
<dbReference type="GO" id="GO:0140785">
    <property type="term" value="F:amino acid sensor activity"/>
    <property type="evidence" value="ECO:0000314"/>
    <property type="project" value="UniProt"/>
</dbReference>
<dbReference type="GO" id="GO:0003925">
    <property type="term" value="F:G protein activity"/>
    <property type="evidence" value="ECO:0000314"/>
    <property type="project" value="UniProtKB"/>
</dbReference>
<dbReference type="GO" id="GO:0005525">
    <property type="term" value="F:GTP binding"/>
    <property type="evidence" value="ECO:0007669"/>
    <property type="project" value="UniProtKB-KW"/>
</dbReference>
<dbReference type="GO" id="GO:0003924">
    <property type="term" value="F:GTPase activity"/>
    <property type="evidence" value="ECO:0000318"/>
    <property type="project" value="GO_Central"/>
</dbReference>
<dbReference type="GO" id="GO:1990253">
    <property type="term" value="P:cellular response to leucine starvation"/>
    <property type="evidence" value="ECO:0000315"/>
    <property type="project" value="UniProtKB"/>
</dbReference>
<dbReference type="GO" id="GO:0048208">
    <property type="term" value="P:COPII vesicle coating"/>
    <property type="evidence" value="ECO:0000314"/>
    <property type="project" value="UniProtKB"/>
</dbReference>
<dbReference type="GO" id="GO:0090110">
    <property type="term" value="P:COPII-coated vesicle cargo loading"/>
    <property type="evidence" value="ECO:0000314"/>
    <property type="project" value="UniProtKB"/>
</dbReference>
<dbReference type="GO" id="GO:0006888">
    <property type="term" value="P:endoplasmic reticulum to Golgi vesicle-mediated transport"/>
    <property type="evidence" value="ECO:0000314"/>
    <property type="project" value="UniProtKB"/>
</dbReference>
<dbReference type="GO" id="GO:0006886">
    <property type="term" value="P:intracellular protein transport"/>
    <property type="evidence" value="ECO:0007669"/>
    <property type="project" value="InterPro"/>
</dbReference>
<dbReference type="GO" id="GO:0061024">
    <property type="term" value="P:membrane organization"/>
    <property type="evidence" value="ECO:0000318"/>
    <property type="project" value="GO_Central"/>
</dbReference>
<dbReference type="GO" id="GO:1904262">
    <property type="term" value="P:negative regulation of TORC1 signaling"/>
    <property type="evidence" value="ECO:0000315"/>
    <property type="project" value="UniProtKB"/>
</dbReference>
<dbReference type="GO" id="GO:0003400">
    <property type="term" value="P:regulation of COPII vesicle coating"/>
    <property type="evidence" value="ECO:0000318"/>
    <property type="project" value="GO_Central"/>
</dbReference>
<dbReference type="GO" id="GO:1903432">
    <property type="term" value="P:regulation of TORC1 signaling"/>
    <property type="evidence" value="ECO:0000314"/>
    <property type="project" value="UniProt"/>
</dbReference>
<dbReference type="GO" id="GO:0016050">
    <property type="term" value="P:vesicle organization"/>
    <property type="evidence" value="ECO:0000318"/>
    <property type="project" value="GO_Central"/>
</dbReference>
<dbReference type="CDD" id="cd00879">
    <property type="entry name" value="Sar1"/>
    <property type="match status" value="1"/>
</dbReference>
<dbReference type="FunFam" id="3.40.50.300:FF:000161">
    <property type="entry name" value="Small COPII coat GTPase"/>
    <property type="match status" value="1"/>
</dbReference>
<dbReference type="Gene3D" id="3.40.50.300">
    <property type="entry name" value="P-loop containing nucleotide triphosphate hydrolases"/>
    <property type="match status" value="1"/>
</dbReference>
<dbReference type="InterPro" id="IPR027417">
    <property type="entry name" value="P-loop_NTPase"/>
</dbReference>
<dbReference type="InterPro" id="IPR005225">
    <property type="entry name" value="Small_GTP-bd"/>
</dbReference>
<dbReference type="InterPro" id="IPR006689">
    <property type="entry name" value="Small_GTPase_ARF/SAR"/>
</dbReference>
<dbReference type="InterPro" id="IPR006687">
    <property type="entry name" value="Small_GTPase_SAR1"/>
</dbReference>
<dbReference type="NCBIfam" id="TIGR00231">
    <property type="entry name" value="small_GTP"/>
    <property type="match status" value="1"/>
</dbReference>
<dbReference type="PANTHER" id="PTHR45684">
    <property type="entry name" value="RE74312P"/>
    <property type="match status" value="1"/>
</dbReference>
<dbReference type="Pfam" id="PF00025">
    <property type="entry name" value="Arf"/>
    <property type="match status" value="1"/>
</dbReference>
<dbReference type="PRINTS" id="PR00328">
    <property type="entry name" value="SAR1GTPBP"/>
</dbReference>
<dbReference type="SMART" id="SM00177">
    <property type="entry name" value="ARF"/>
    <property type="match status" value="1"/>
</dbReference>
<dbReference type="SMART" id="SM00178">
    <property type="entry name" value="SAR"/>
    <property type="match status" value="1"/>
</dbReference>
<dbReference type="SUPFAM" id="SSF52540">
    <property type="entry name" value="P-loop containing nucleoside triphosphate hydrolases"/>
    <property type="match status" value="1"/>
</dbReference>
<dbReference type="PROSITE" id="PS51422">
    <property type="entry name" value="SAR1"/>
    <property type="match status" value="1"/>
</dbReference>
<reference key="1">
    <citation type="journal article" date="2000" name="J. Cell Biol.">
        <title>Inhibitors of COPI and COPII do not block PEX3-mediated peroxisome synthesis.</title>
        <authorList>
            <person name="South S.T."/>
            <person name="Sacksteder K.A."/>
            <person name="Li X."/>
            <person name="Liu Y."/>
            <person name="Gould S.J."/>
        </authorList>
    </citation>
    <scope>NUCLEOTIDE SEQUENCE [MRNA] (ISOFORM 1)</scope>
</reference>
<reference key="2">
    <citation type="journal article" date="2001" name="Genome Res.">
        <title>Towards a catalog of human genes and proteins: sequencing and analysis of 500 novel complete protein coding human cDNAs.</title>
        <authorList>
            <person name="Wiemann S."/>
            <person name="Weil B."/>
            <person name="Wellenreuther R."/>
            <person name="Gassenhuber J."/>
            <person name="Glassl S."/>
            <person name="Ansorge W."/>
            <person name="Boecher M."/>
            <person name="Bloecker H."/>
            <person name="Bauersachs S."/>
            <person name="Blum H."/>
            <person name="Lauber J."/>
            <person name="Duesterhoeft A."/>
            <person name="Beyer A."/>
            <person name="Koehrer K."/>
            <person name="Strack N."/>
            <person name="Mewes H.-W."/>
            <person name="Ottenwaelder B."/>
            <person name="Obermaier B."/>
            <person name="Tampe J."/>
            <person name="Heubner D."/>
            <person name="Wambutt R."/>
            <person name="Korn B."/>
            <person name="Klein M."/>
            <person name="Poustka A."/>
        </authorList>
    </citation>
    <scope>NUCLEOTIDE SEQUENCE [LARGE SCALE MRNA] (ISOFORM 1)</scope>
    <source>
        <tissue>Kidney</tissue>
    </source>
</reference>
<reference key="3">
    <citation type="submission" date="2000-09" db="EMBL/GenBank/DDBJ databases">
        <title>Identification of putative target genes involved in lung carcinogenesis.</title>
        <authorList>
            <person name="Pietas A."/>
            <person name="Petersen I."/>
            <person name="Schluens K."/>
            <person name="Petersen S."/>
        </authorList>
    </citation>
    <scope>NUCLEOTIDE SEQUENCE [MRNA] (ISOFORM 1)</scope>
    <source>
        <tissue>Lung</tissue>
    </source>
</reference>
<reference key="4">
    <citation type="journal article" date="2004" name="Nat. Genet.">
        <title>Complete sequencing and characterization of 21,243 full-length human cDNAs.</title>
        <authorList>
            <person name="Ota T."/>
            <person name="Suzuki Y."/>
            <person name="Nishikawa T."/>
            <person name="Otsuki T."/>
            <person name="Sugiyama T."/>
            <person name="Irie R."/>
            <person name="Wakamatsu A."/>
            <person name="Hayashi K."/>
            <person name="Sato H."/>
            <person name="Nagai K."/>
            <person name="Kimura K."/>
            <person name="Makita H."/>
            <person name="Sekine M."/>
            <person name="Obayashi M."/>
            <person name="Nishi T."/>
            <person name="Shibahara T."/>
            <person name="Tanaka T."/>
            <person name="Ishii S."/>
            <person name="Yamamoto J."/>
            <person name="Saito K."/>
            <person name="Kawai Y."/>
            <person name="Isono Y."/>
            <person name="Nakamura Y."/>
            <person name="Nagahari K."/>
            <person name="Murakami K."/>
            <person name="Yasuda T."/>
            <person name="Iwayanagi T."/>
            <person name="Wagatsuma M."/>
            <person name="Shiratori A."/>
            <person name="Sudo H."/>
            <person name="Hosoiri T."/>
            <person name="Kaku Y."/>
            <person name="Kodaira H."/>
            <person name="Kondo H."/>
            <person name="Sugawara M."/>
            <person name="Takahashi M."/>
            <person name="Kanda K."/>
            <person name="Yokoi T."/>
            <person name="Furuya T."/>
            <person name="Kikkawa E."/>
            <person name="Omura Y."/>
            <person name="Abe K."/>
            <person name="Kamihara K."/>
            <person name="Katsuta N."/>
            <person name="Sato K."/>
            <person name="Tanikawa M."/>
            <person name="Yamazaki M."/>
            <person name="Ninomiya K."/>
            <person name="Ishibashi T."/>
            <person name="Yamashita H."/>
            <person name="Murakawa K."/>
            <person name="Fujimori K."/>
            <person name="Tanai H."/>
            <person name="Kimata M."/>
            <person name="Watanabe M."/>
            <person name="Hiraoka S."/>
            <person name="Chiba Y."/>
            <person name="Ishida S."/>
            <person name="Ono Y."/>
            <person name="Takiguchi S."/>
            <person name="Watanabe S."/>
            <person name="Yosida M."/>
            <person name="Hotuta T."/>
            <person name="Kusano J."/>
            <person name="Kanehori K."/>
            <person name="Takahashi-Fujii A."/>
            <person name="Hara H."/>
            <person name="Tanase T.-O."/>
            <person name="Nomura Y."/>
            <person name="Togiya S."/>
            <person name="Komai F."/>
            <person name="Hara R."/>
            <person name="Takeuchi K."/>
            <person name="Arita M."/>
            <person name="Imose N."/>
            <person name="Musashino K."/>
            <person name="Yuuki H."/>
            <person name="Oshima A."/>
            <person name="Sasaki N."/>
            <person name="Aotsuka S."/>
            <person name="Yoshikawa Y."/>
            <person name="Matsunawa H."/>
            <person name="Ichihara T."/>
            <person name="Shiohata N."/>
            <person name="Sano S."/>
            <person name="Moriya S."/>
            <person name="Momiyama H."/>
            <person name="Satoh N."/>
            <person name="Takami S."/>
            <person name="Terashima Y."/>
            <person name="Suzuki O."/>
            <person name="Nakagawa S."/>
            <person name="Senoh A."/>
            <person name="Mizoguchi H."/>
            <person name="Goto Y."/>
            <person name="Shimizu F."/>
            <person name="Wakebe H."/>
            <person name="Hishigaki H."/>
            <person name="Watanabe T."/>
            <person name="Sugiyama A."/>
            <person name="Takemoto M."/>
            <person name="Kawakami B."/>
            <person name="Yamazaki M."/>
            <person name="Watanabe K."/>
            <person name="Kumagai A."/>
            <person name="Itakura S."/>
            <person name="Fukuzumi Y."/>
            <person name="Fujimori Y."/>
            <person name="Komiyama M."/>
            <person name="Tashiro H."/>
            <person name="Tanigami A."/>
            <person name="Fujiwara T."/>
            <person name="Ono T."/>
            <person name="Yamada K."/>
            <person name="Fujii Y."/>
            <person name="Ozaki K."/>
            <person name="Hirao M."/>
            <person name="Ohmori Y."/>
            <person name="Kawabata A."/>
            <person name="Hikiji T."/>
            <person name="Kobatake N."/>
            <person name="Inagaki H."/>
            <person name="Ikema Y."/>
            <person name="Okamoto S."/>
            <person name="Okitani R."/>
            <person name="Kawakami T."/>
            <person name="Noguchi S."/>
            <person name="Itoh T."/>
            <person name="Shigeta K."/>
            <person name="Senba T."/>
            <person name="Matsumura K."/>
            <person name="Nakajima Y."/>
            <person name="Mizuno T."/>
            <person name="Morinaga M."/>
            <person name="Sasaki M."/>
            <person name="Togashi T."/>
            <person name="Oyama M."/>
            <person name="Hata H."/>
            <person name="Watanabe M."/>
            <person name="Komatsu T."/>
            <person name="Mizushima-Sugano J."/>
            <person name="Satoh T."/>
            <person name="Shirai Y."/>
            <person name="Takahashi Y."/>
            <person name="Nakagawa K."/>
            <person name="Okumura K."/>
            <person name="Nagase T."/>
            <person name="Nomura N."/>
            <person name="Kikuchi H."/>
            <person name="Masuho Y."/>
            <person name="Yamashita R."/>
            <person name="Nakai K."/>
            <person name="Yada T."/>
            <person name="Nakamura Y."/>
            <person name="Ohara O."/>
            <person name="Isogai T."/>
            <person name="Sugano S."/>
        </authorList>
    </citation>
    <scope>NUCLEOTIDE SEQUENCE [LARGE SCALE MRNA] (ISOFORM 2)</scope>
</reference>
<reference key="5">
    <citation type="journal article" date="2004" name="Nature">
        <title>The DNA sequence and comparative analysis of human chromosome 10.</title>
        <authorList>
            <person name="Deloukas P."/>
            <person name="Earthrowl M.E."/>
            <person name="Grafham D.V."/>
            <person name="Rubenfield M."/>
            <person name="French L."/>
            <person name="Steward C.A."/>
            <person name="Sims S.K."/>
            <person name="Jones M.C."/>
            <person name="Searle S."/>
            <person name="Scott C."/>
            <person name="Howe K."/>
            <person name="Hunt S.E."/>
            <person name="Andrews T.D."/>
            <person name="Gilbert J.G.R."/>
            <person name="Swarbreck D."/>
            <person name="Ashurst J.L."/>
            <person name="Taylor A."/>
            <person name="Battles J."/>
            <person name="Bird C.P."/>
            <person name="Ainscough R."/>
            <person name="Almeida J.P."/>
            <person name="Ashwell R.I.S."/>
            <person name="Ambrose K.D."/>
            <person name="Babbage A.K."/>
            <person name="Bagguley C.L."/>
            <person name="Bailey J."/>
            <person name="Banerjee R."/>
            <person name="Bates K."/>
            <person name="Beasley H."/>
            <person name="Bray-Allen S."/>
            <person name="Brown A.J."/>
            <person name="Brown J.Y."/>
            <person name="Burford D.C."/>
            <person name="Burrill W."/>
            <person name="Burton J."/>
            <person name="Cahill P."/>
            <person name="Camire D."/>
            <person name="Carter N.P."/>
            <person name="Chapman J.C."/>
            <person name="Clark S.Y."/>
            <person name="Clarke G."/>
            <person name="Clee C.M."/>
            <person name="Clegg S."/>
            <person name="Corby N."/>
            <person name="Coulson A."/>
            <person name="Dhami P."/>
            <person name="Dutta I."/>
            <person name="Dunn M."/>
            <person name="Faulkner L."/>
            <person name="Frankish A."/>
            <person name="Frankland J.A."/>
            <person name="Garner P."/>
            <person name="Garnett J."/>
            <person name="Gribble S."/>
            <person name="Griffiths C."/>
            <person name="Grocock R."/>
            <person name="Gustafson E."/>
            <person name="Hammond S."/>
            <person name="Harley J.L."/>
            <person name="Hart E."/>
            <person name="Heath P.D."/>
            <person name="Ho T.P."/>
            <person name="Hopkins B."/>
            <person name="Horne J."/>
            <person name="Howden P.J."/>
            <person name="Huckle E."/>
            <person name="Hynds C."/>
            <person name="Johnson C."/>
            <person name="Johnson D."/>
            <person name="Kana A."/>
            <person name="Kay M."/>
            <person name="Kimberley A.M."/>
            <person name="Kershaw J.K."/>
            <person name="Kokkinaki M."/>
            <person name="Laird G.K."/>
            <person name="Lawlor S."/>
            <person name="Lee H.M."/>
            <person name="Leongamornlert D.A."/>
            <person name="Laird G."/>
            <person name="Lloyd C."/>
            <person name="Lloyd D.M."/>
            <person name="Loveland J."/>
            <person name="Lovell J."/>
            <person name="McLaren S."/>
            <person name="McLay K.E."/>
            <person name="McMurray A."/>
            <person name="Mashreghi-Mohammadi M."/>
            <person name="Matthews L."/>
            <person name="Milne S."/>
            <person name="Nickerson T."/>
            <person name="Nguyen M."/>
            <person name="Overton-Larty E."/>
            <person name="Palmer S.A."/>
            <person name="Pearce A.V."/>
            <person name="Peck A.I."/>
            <person name="Pelan S."/>
            <person name="Phillimore B."/>
            <person name="Porter K."/>
            <person name="Rice C.M."/>
            <person name="Rogosin A."/>
            <person name="Ross M.T."/>
            <person name="Sarafidou T."/>
            <person name="Sehra H.K."/>
            <person name="Shownkeen R."/>
            <person name="Skuce C.D."/>
            <person name="Smith M."/>
            <person name="Standring L."/>
            <person name="Sycamore N."/>
            <person name="Tester J."/>
            <person name="Thorpe A."/>
            <person name="Torcasso W."/>
            <person name="Tracey A."/>
            <person name="Tromans A."/>
            <person name="Tsolas J."/>
            <person name="Wall M."/>
            <person name="Walsh J."/>
            <person name="Wang H."/>
            <person name="Weinstock K."/>
            <person name="West A.P."/>
            <person name="Willey D.L."/>
            <person name="Whitehead S.L."/>
            <person name="Wilming L."/>
            <person name="Wray P.W."/>
            <person name="Young L."/>
            <person name="Chen Y."/>
            <person name="Lovering R.C."/>
            <person name="Moschonas N.K."/>
            <person name="Siebert R."/>
            <person name="Fechtel K."/>
            <person name="Bentley D."/>
            <person name="Durbin R.M."/>
            <person name="Hubbard T."/>
            <person name="Doucette-Stamm L."/>
            <person name="Beck S."/>
            <person name="Smith D.R."/>
            <person name="Rogers J."/>
        </authorList>
    </citation>
    <scope>NUCLEOTIDE SEQUENCE [LARGE SCALE GENOMIC DNA]</scope>
</reference>
<reference key="6">
    <citation type="journal article" date="2004" name="Genome Res.">
        <title>The status, quality, and expansion of the NIH full-length cDNA project: the Mammalian Gene Collection (MGC).</title>
        <authorList>
            <consortium name="The MGC Project Team"/>
        </authorList>
    </citation>
    <scope>NUCLEOTIDE SEQUENCE [LARGE SCALE MRNA] (ISOFORM 1)</scope>
    <source>
        <tissue>Skin</tissue>
    </source>
</reference>
<reference key="7">
    <citation type="journal article" date="2006" name="Traffic">
        <title>Sec16 defines endoplasmic reticulum exit sites and is required for secretory cargo export in mammalian cells.</title>
        <authorList>
            <person name="Watson P."/>
            <person name="Townley A.K."/>
            <person name="Koka P."/>
            <person name="Palmer K.J."/>
            <person name="Stephens D.J."/>
        </authorList>
    </citation>
    <scope>FUNCTION</scope>
</reference>
<reference key="8">
    <citation type="journal article" date="2008" name="Proc. Natl. Acad. Sci. U.S.A.">
        <title>A quantitative atlas of mitotic phosphorylation.</title>
        <authorList>
            <person name="Dephoure N."/>
            <person name="Zhou C."/>
            <person name="Villen J."/>
            <person name="Beausoleil S.A."/>
            <person name="Bakalarski C.E."/>
            <person name="Elledge S.J."/>
            <person name="Gygi S.P."/>
        </authorList>
    </citation>
    <scope>PHOSPHORYLATION [LARGE SCALE ANALYSIS] AT THR-139</scope>
    <scope>IDENTIFICATION BY MASS SPECTROMETRY [LARGE SCALE ANALYSIS]</scope>
    <source>
        <tissue>Cervix carcinoma</tissue>
    </source>
</reference>
<reference key="9">
    <citation type="journal article" date="2009" name="J. Biol. Chem.">
        <title>Distinct transport and intracellular activities of two GlcAT-P isoforms.</title>
        <authorList>
            <person name="Kizuka Y."/>
            <person name="Tonoyama Y."/>
            <person name="Oka S."/>
        </authorList>
    </citation>
    <scope>INTERACTION WITH B3GAT1</scope>
</reference>
<reference key="10">
    <citation type="journal article" date="2010" name="Sci. Signal.">
        <title>Quantitative phosphoproteomics reveals widespread full phosphorylation site occupancy during mitosis.</title>
        <authorList>
            <person name="Olsen J.V."/>
            <person name="Vermeulen M."/>
            <person name="Santamaria A."/>
            <person name="Kumar C."/>
            <person name="Miller M.L."/>
            <person name="Jensen L.J."/>
            <person name="Gnad F."/>
            <person name="Cox J."/>
            <person name="Jensen T.S."/>
            <person name="Nigg E.A."/>
            <person name="Brunak S."/>
            <person name="Mann M."/>
        </authorList>
    </citation>
    <scope>PHOSPHORYLATION [LARGE SCALE ANALYSIS] AT THR-139</scope>
    <scope>IDENTIFICATION BY MASS SPECTROMETRY [LARGE SCALE ANALYSIS]</scope>
    <source>
        <tissue>Cervix carcinoma</tissue>
    </source>
</reference>
<reference key="11">
    <citation type="journal article" date="2011" name="BMC Syst. Biol.">
        <title>Initial characterization of the human central proteome.</title>
        <authorList>
            <person name="Burkard T.R."/>
            <person name="Planyavsky M."/>
            <person name="Kaupe I."/>
            <person name="Breitwieser F.P."/>
            <person name="Buerckstuemmer T."/>
            <person name="Bennett K.L."/>
            <person name="Superti-Furga G."/>
            <person name="Colinge J."/>
        </authorList>
    </citation>
    <scope>IDENTIFICATION BY MASS SPECTROMETRY [LARGE SCALE ANALYSIS]</scope>
</reference>
<reference key="12">
    <citation type="journal article" date="2013" name="J. Proteome Res.">
        <title>Toward a comprehensive characterization of a human cancer cell phosphoproteome.</title>
        <authorList>
            <person name="Zhou H."/>
            <person name="Di Palma S."/>
            <person name="Preisinger C."/>
            <person name="Peng M."/>
            <person name="Polat A.N."/>
            <person name="Heck A.J."/>
            <person name="Mohammed S."/>
        </authorList>
    </citation>
    <scope>PHOSPHORYLATION [LARGE SCALE ANALYSIS] AT THR-139</scope>
    <scope>IDENTIFICATION BY MASS SPECTROMETRY [LARGE SCALE ANALYSIS]</scope>
    <source>
        <tissue>Cervix carcinoma</tissue>
        <tissue>Erythroleukemia</tissue>
    </source>
</reference>
<reference key="13">
    <citation type="journal article" date="2013" name="Traffic">
        <title>Silencing of mammalian Sar1 isoforms reveals COPII-independent protein sorting and transport.</title>
        <authorList>
            <person name="Cutrona M.B."/>
            <person name="Beznoussenko G.V."/>
            <person name="Fusella A."/>
            <person name="Martella O."/>
            <person name="Moral P."/>
            <person name="Mironov A.A."/>
        </authorList>
    </citation>
    <scope>FUNCTION</scope>
    <scope>SUBCELLULAR LOCATION</scope>
</reference>
<reference key="14">
    <citation type="journal article" date="2014" name="J. Proteomics">
        <title>An enzyme assisted RP-RPLC approach for in-depth analysis of human liver phosphoproteome.</title>
        <authorList>
            <person name="Bian Y."/>
            <person name="Song C."/>
            <person name="Cheng K."/>
            <person name="Dong M."/>
            <person name="Wang F."/>
            <person name="Huang J."/>
            <person name="Sun D."/>
            <person name="Wang L."/>
            <person name="Ye M."/>
            <person name="Zou H."/>
        </authorList>
    </citation>
    <scope>IDENTIFICATION BY MASS SPECTROMETRY [LARGE SCALE ANALYSIS]</scope>
    <source>
        <tissue>Liver</tissue>
    </source>
</reference>
<reference key="15">
    <citation type="journal article" date="2015" name="Proteomics">
        <title>N-terminome analysis of the human mitochondrial proteome.</title>
        <authorList>
            <person name="Vaca Jacome A.S."/>
            <person name="Rabilloud T."/>
            <person name="Schaeffer-Reiss C."/>
            <person name="Rompais M."/>
            <person name="Ayoub D."/>
            <person name="Lane L."/>
            <person name="Bairoch A."/>
            <person name="Van Dorsselaer A."/>
            <person name="Carapito C."/>
        </authorList>
    </citation>
    <scope>IDENTIFICATION BY MASS SPECTROMETRY [LARGE SCALE ANALYSIS]</scope>
</reference>
<reference key="16">
    <citation type="journal article" date="2020" name="Nat. Immunol.">
        <title>STEEP mediates STING ER exit and activation of signaling.</title>
        <authorList>
            <person name="Zhang B.C."/>
            <person name="Nandakumar R."/>
            <person name="Reinert L.S."/>
            <person name="Huang J."/>
            <person name="Laustsen A."/>
            <person name="Gao Z.L."/>
            <person name="Sun C.L."/>
            <person name="Jensen S.B."/>
            <person name="Troldborg A."/>
            <person name="Assil S."/>
            <person name="Berthelsen M.F."/>
            <person name="Scavenius C."/>
            <person name="Zhang Y."/>
            <person name="Windross S.J."/>
            <person name="Olagnier D."/>
            <person name="Prabakaran T."/>
            <person name="Bodda C."/>
            <person name="Narita R."/>
            <person name="Cai Y."/>
            <person name="Zhang C.G."/>
            <person name="Stenmark H."/>
            <person name="Doucet C.M."/>
            <person name="Noda T."/>
            <person name="Guo Z."/>
            <person name="Goldbach-Mansky R."/>
            <person name="Hartmann R."/>
            <person name="Chen Z.J."/>
            <person name="Enghild J.J."/>
            <person name="Bak R.O."/>
            <person name="Thomsen M.K."/>
            <person name="Paludan S.R."/>
        </authorList>
    </citation>
    <scope>MUTAGENESIS OF HIS-79</scope>
</reference>
<reference key="17">
    <citation type="journal article" date="2020" name="Nat. Immunol.">
        <authorList>
            <person name="Zhang B.C."/>
            <person name="Nandakumar R."/>
            <person name="Reinert L.S."/>
            <person name="Huang J."/>
            <person name="Laustsen A."/>
            <person name="Gao Z.L."/>
            <person name="Sun C.L."/>
            <person name="Jensen S.B."/>
            <person name="Troldborg A."/>
            <person name="Assil S."/>
            <person name="Berthelsen M.F."/>
            <person name="Scavenius C."/>
            <person name="Zhang Y."/>
            <person name="Windross S.J."/>
            <person name="Olagnier D."/>
            <person name="Prabakaran T."/>
            <person name="Bodda C."/>
            <person name="Narita R."/>
            <person name="Cai Y."/>
            <person name="Zhang C.G."/>
            <person name="Stenmark H."/>
            <person name="Doucet C.M."/>
            <person name="Noda T."/>
            <person name="Guo Z."/>
            <person name="Goldbach-Mansky R."/>
            <person name="Hartmann R."/>
            <person name="Chen Z.J."/>
            <person name="Enghild J.J."/>
            <person name="Bak R.O."/>
            <person name="Thomsen M.K."/>
            <person name="Paludan S.R."/>
        </authorList>
    </citation>
    <scope>ERRATUM OF PUBMED:32690950</scope>
</reference>
<reference key="18">
    <citation type="journal article" date="2020" name="J. Biol. Chem.">
        <title>Small sequence variations between two mammalian paralogs of the small GTPase SAR1 underlie functional differences in coat protein complex II assembly.</title>
        <authorList>
            <person name="Melville D.B."/>
            <person name="Studer S."/>
            <person name="Schekman R."/>
        </authorList>
    </citation>
    <scope>FUNCTION</scope>
    <scope>CATALYTIC ACTIVITY</scope>
    <scope>ACTIVITY REGULATION</scope>
    <scope>SUBUNIT</scope>
    <scope>SUBCELLULAR LOCATION</scope>
</reference>
<reference key="19">
    <citation type="journal article" date="2021" name="Nature">
        <title>SAR1B senses leucine levels to regulate mTORC1 signalling.</title>
        <authorList>
            <person name="Chen J."/>
            <person name="Ou Y."/>
            <person name="Luo R."/>
            <person name="Wang J."/>
            <person name="Wang D."/>
            <person name="Guan J."/>
            <person name="Li Y."/>
            <person name="Xia P."/>
            <person name="Chen P.R."/>
            <person name="Liu Y."/>
        </authorList>
    </citation>
    <scope>FUNCTION</scope>
    <scope>INTERACTION WITH MIOS</scope>
    <scope>SUBCELLULAR LOCATION</scope>
</reference>
<reference evidence="17 18 19 20 21" key="20">
    <citation type="journal article" date="2023" name="Proteins">
        <title>The alarmone ppGpp selectively inhibits the isoform A of the human small GTPase Sar1.</title>
        <authorList>
            <person name="Huang Q."/>
            <person name="Szebenyi D.M.E."/>
        </authorList>
    </citation>
    <scope>X-RAY CRYSTALLOGRAPHY (1.80 ANGSTROMS) IN COMPLEX WITH GDP; INHIBITOR AND MG(2+)</scope>
    <scope>FUNCTION</scope>
    <scope>CATALYTIC ACTIVITY</scope>
    <scope>ACTIVITY REGULATION</scope>
    <scope>BIOPHYSICOCHEMICAL PROPERTIES</scope>
</reference>
<name>SAR1A_HUMAN</name>